<protein>
    <recommendedName>
        <fullName>Tripartite motif-containing protein 72</fullName>
        <ecNumber evidence="2">2.3.2.27</ecNumber>
    </recommendedName>
    <alternativeName>
        <fullName evidence="3">Mitsugumin-53</fullName>
        <shortName>Mg53</shortName>
    </alternativeName>
</protein>
<gene>
    <name type="primary">trim72</name>
    <name type="synonym">mg53</name>
</gene>
<accession>Q640S6</accession>
<reference key="1">
    <citation type="submission" date="2004-09" db="EMBL/GenBank/DDBJ databases">
        <authorList>
            <consortium name="NIH - Xenopus Gene Collection (XGC) project"/>
        </authorList>
    </citation>
    <scope>NUCLEOTIDE SEQUENCE [LARGE SCALE MRNA]</scope>
</reference>
<feature type="chain" id="PRO_0000383154" description="Tripartite motif-containing protein 72">
    <location>
        <begin position="1"/>
        <end position="477"/>
    </location>
</feature>
<feature type="domain" description="B30.2/SPRY" evidence="7">
    <location>
        <begin position="272"/>
        <end position="476"/>
    </location>
</feature>
<feature type="zinc finger region" description="RING-type" evidence="6">
    <location>
        <begin position="16"/>
        <end position="59"/>
    </location>
</feature>
<feature type="zinc finger region" description="B box-type" evidence="5">
    <location>
        <begin position="83"/>
        <end position="124"/>
    </location>
</feature>
<feature type="coiled-coil region" evidence="2 4">
    <location>
        <begin position="135"/>
        <end position="232"/>
    </location>
</feature>
<feature type="binding site" evidence="2">
    <location>
        <position position="14"/>
    </location>
    <ligand>
        <name>Zn(2+)</name>
        <dbReference type="ChEBI" id="CHEBI:29105"/>
        <label>1</label>
        <note>structural for RING</note>
    </ligand>
</feature>
<feature type="binding site" evidence="2">
    <location>
        <position position="17"/>
    </location>
    <ligand>
        <name>Zn(2+)</name>
        <dbReference type="ChEBI" id="CHEBI:29105"/>
        <label>1</label>
        <note>structural for RING</note>
    </ligand>
</feature>
<feature type="binding site" evidence="2">
    <location>
        <position position="29"/>
    </location>
    <ligand>
        <name>Zn(2+)</name>
        <dbReference type="ChEBI" id="CHEBI:29105"/>
        <label>2</label>
        <note>structural for RING</note>
    </ligand>
</feature>
<feature type="binding site" evidence="2">
    <location>
        <position position="31"/>
    </location>
    <ligand>
        <name>Zn(2+)</name>
        <dbReference type="ChEBI" id="CHEBI:29105"/>
        <label>2</label>
        <note>structural for RING</note>
    </ligand>
</feature>
<feature type="binding site" evidence="2">
    <location>
        <position position="34"/>
    </location>
    <ligand>
        <name>Zn(2+)</name>
        <dbReference type="ChEBI" id="CHEBI:29105"/>
        <label>1</label>
        <note>structural for RING</note>
    </ligand>
</feature>
<feature type="binding site" evidence="2">
    <location>
        <position position="37"/>
    </location>
    <ligand>
        <name>Zn(2+)</name>
        <dbReference type="ChEBI" id="CHEBI:29105"/>
        <label>1</label>
        <note>structural for RING</note>
    </ligand>
</feature>
<feature type="binding site" evidence="2">
    <location>
        <position position="53"/>
    </location>
    <ligand>
        <name>Zn(2+)</name>
        <dbReference type="ChEBI" id="CHEBI:29105"/>
        <label>2</label>
        <note>structural for RING</note>
    </ligand>
</feature>
<feature type="binding site" evidence="2">
    <location>
        <position position="56"/>
    </location>
    <ligand>
        <name>Zn(2+)</name>
        <dbReference type="ChEBI" id="CHEBI:29105"/>
        <label>2</label>
        <note>structural for RING</note>
    </ligand>
</feature>
<feature type="binding site" evidence="2 5">
    <location>
        <position position="86"/>
    </location>
    <ligand>
        <name>Zn(2+)</name>
        <dbReference type="ChEBI" id="CHEBI:29105"/>
        <label>3</label>
        <note>structural for B-box</note>
    </ligand>
</feature>
<feature type="binding site" evidence="2 5">
    <location>
        <position position="89"/>
    </location>
    <ligand>
        <name>Zn(2+)</name>
        <dbReference type="ChEBI" id="CHEBI:29105"/>
        <label>3</label>
        <note>structural for B-box</note>
    </ligand>
</feature>
<feature type="binding site" evidence="2">
    <location>
        <position position="97"/>
    </location>
    <ligand>
        <name>Zn(2+)</name>
        <dbReference type="ChEBI" id="CHEBI:29105"/>
        <label>4</label>
        <note>structural for B-box</note>
    </ligand>
</feature>
<feature type="binding site" evidence="2">
    <location>
        <position position="100"/>
    </location>
    <ligand>
        <name>Zn(2+)</name>
        <dbReference type="ChEBI" id="CHEBI:29105"/>
        <label>4</label>
        <note>structural for B-box</note>
    </ligand>
</feature>
<feature type="binding site" evidence="2">
    <location>
        <position position="105"/>
    </location>
    <ligand>
        <name>Zn(2+)</name>
        <dbReference type="ChEBI" id="CHEBI:29105"/>
        <label>3</label>
        <note>structural for B-box</note>
    </ligand>
</feature>
<feature type="binding site" evidence="2 5">
    <location>
        <position position="108"/>
    </location>
    <ligand>
        <name>Zn(2+)</name>
        <dbReference type="ChEBI" id="CHEBI:29105"/>
        <label>3</label>
        <note>structural for B-box</note>
    </ligand>
</feature>
<feature type="binding site" evidence="2 5">
    <location>
        <position position="114"/>
    </location>
    <ligand>
        <name>Zn(2+)</name>
        <dbReference type="ChEBI" id="CHEBI:29105"/>
        <label>4</label>
        <note>structural for B-box</note>
    </ligand>
</feature>
<feature type="binding site" evidence="2">
    <location>
        <position position="117"/>
    </location>
    <ligand>
        <name>Zn(2+)</name>
        <dbReference type="ChEBI" id="CHEBI:29105"/>
        <label>4</label>
        <note>structural for B-box</note>
    </ligand>
</feature>
<feature type="disulfide bond" description="Interchain" evidence="2">
    <location>
        <position position="244"/>
    </location>
</feature>
<dbReference type="EC" id="2.3.2.27" evidence="2"/>
<dbReference type="EMBL" id="BC082513">
    <property type="protein sequence ID" value="AAH82513.1"/>
    <property type="molecule type" value="mRNA"/>
</dbReference>
<dbReference type="RefSeq" id="NP_001008188.1">
    <property type="nucleotide sequence ID" value="NM_001008187.1"/>
</dbReference>
<dbReference type="SMR" id="Q640S6"/>
<dbReference type="FunCoup" id="Q640S6">
    <property type="interactions" value="59"/>
</dbReference>
<dbReference type="STRING" id="8364.ENSXETP00000003628"/>
<dbReference type="PaxDb" id="8364-ENSXETP00000056209"/>
<dbReference type="DNASU" id="493550"/>
<dbReference type="GeneID" id="493550"/>
<dbReference type="KEGG" id="xtr:493550"/>
<dbReference type="AGR" id="Xenbase:XB-GENE-5896447"/>
<dbReference type="CTD" id="493829"/>
<dbReference type="Xenbase" id="XB-GENE-5896447">
    <property type="gene designation" value="trim72"/>
</dbReference>
<dbReference type="eggNOG" id="KOG2177">
    <property type="taxonomic scope" value="Eukaryota"/>
</dbReference>
<dbReference type="HOGENOM" id="CLU_013137_0_3_1"/>
<dbReference type="InParanoid" id="Q640S6"/>
<dbReference type="OrthoDB" id="6105938at2759"/>
<dbReference type="PhylomeDB" id="Q640S6"/>
<dbReference type="TreeFam" id="TF342569"/>
<dbReference type="UniPathway" id="UPA00143"/>
<dbReference type="Proteomes" id="UP000008143">
    <property type="component" value="Chromosome 9"/>
</dbReference>
<dbReference type="ExpressionAtlas" id="Q640S6">
    <property type="expression patterns" value="baseline"/>
</dbReference>
<dbReference type="GO" id="GO:0030659">
    <property type="term" value="C:cytoplasmic vesicle membrane"/>
    <property type="evidence" value="ECO:0000250"/>
    <property type="project" value="UniProtKB"/>
</dbReference>
<dbReference type="GO" id="GO:0042383">
    <property type="term" value="C:sarcolemma"/>
    <property type="evidence" value="ECO:0000250"/>
    <property type="project" value="UniProtKB"/>
</dbReference>
<dbReference type="GO" id="GO:0001786">
    <property type="term" value="F:phosphatidylserine binding"/>
    <property type="evidence" value="ECO:0000250"/>
    <property type="project" value="UniProtKB"/>
</dbReference>
<dbReference type="GO" id="GO:0016740">
    <property type="term" value="F:transferase activity"/>
    <property type="evidence" value="ECO:0007669"/>
    <property type="project" value="UniProtKB-KW"/>
</dbReference>
<dbReference type="GO" id="GO:0008270">
    <property type="term" value="F:zinc ion binding"/>
    <property type="evidence" value="ECO:0007669"/>
    <property type="project" value="UniProtKB-KW"/>
</dbReference>
<dbReference type="GO" id="GO:0006887">
    <property type="term" value="P:exocytosis"/>
    <property type="evidence" value="ECO:0007669"/>
    <property type="project" value="UniProtKB-KW"/>
</dbReference>
<dbReference type="GO" id="GO:0007517">
    <property type="term" value="P:muscle organ development"/>
    <property type="evidence" value="ECO:0000250"/>
    <property type="project" value="UniProtKB"/>
</dbReference>
<dbReference type="GO" id="GO:0003012">
    <property type="term" value="P:muscle system process"/>
    <property type="evidence" value="ECO:0000250"/>
    <property type="project" value="UniProtKB"/>
</dbReference>
<dbReference type="GO" id="GO:0001778">
    <property type="term" value="P:plasma membrane repair"/>
    <property type="evidence" value="ECO:0000250"/>
    <property type="project" value="UniProtKB"/>
</dbReference>
<dbReference type="GO" id="GO:0051260">
    <property type="term" value="P:protein homooligomerization"/>
    <property type="evidence" value="ECO:0000250"/>
    <property type="project" value="UniProtKB"/>
</dbReference>
<dbReference type="CDD" id="cd19797">
    <property type="entry name" value="Bbox2_TRIM72_C-IV"/>
    <property type="match status" value="1"/>
</dbReference>
<dbReference type="CDD" id="cd16612">
    <property type="entry name" value="RING-HC_TRIM72_C-IV"/>
    <property type="match status" value="1"/>
</dbReference>
<dbReference type="CDD" id="cd13742">
    <property type="entry name" value="SPRY_PRY_TRIM72"/>
    <property type="match status" value="1"/>
</dbReference>
<dbReference type="FunFam" id="2.60.120.920:FF:000027">
    <property type="entry name" value="E3 ubiquitin-protein ligase TRIM50"/>
    <property type="match status" value="1"/>
</dbReference>
<dbReference type="FunFam" id="3.30.40.10:FF:000487">
    <property type="entry name" value="tripartite motif-containing protein 72"/>
    <property type="match status" value="1"/>
</dbReference>
<dbReference type="Gene3D" id="2.60.120.920">
    <property type="match status" value="1"/>
</dbReference>
<dbReference type="Gene3D" id="3.30.160.60">
    <property type="entry name" value="Classic Zinc Finger"/>
    <property type="match status" value="1"/>
</dbReference>
<dbReference type="Gene3D" id="3.30.40.10">
    <property type="entry name" value="Zinc/RING finger domain, C3HC4 (zinc finger)"/>
    <property type="match status" value="1"/>
</dbReference>
<dbReference type="InterPro" id="IPR001870">
    <property type="entry name" value="B30.2/SPRY"/>
</dbReference>
<dbReference type="InterPro" id="IPR043136">
    <property type="entry name" value="B30.2/SPRY_sf"/>
</dbReference>
<dbReference type="InterPro" id="IPR003879">
    <property type="entry name" value="Butyrophylin_SPRY"/>
</dbReference>
<dbReference type="InterPro" id="IPR013320">
    <property type="entry name" value="ConA-like_dom_sf"/>
</dbReference>
<dbReference type="InterPro" id="IPR006574">
    <property type="entry name" value="PRY"/>
</dbReference>
<dbReference type="InterPro" id="IPR003877">
    <property type="entry name" value="SPRY_dom"/>
</dbReference>
<dbReference type="InterPro" id="IPR050143">
    <property type="entry name" value="TRIM/RBCC"/>
</dbReference>
<dbReference type="InterPro" id="IPR027370">
    <property type="entry name" value="Znf-RING_euk"/>
</dbReference>
<dbReference type="InterPro" id="IPR000315">
    <property type="entry name" value="Znf_B-box"/>
</dbReference>
<dbReference type="InterPro" id="IPR001841">
    <property type="entry name" value="Znf_RING"/>
</dbReference>
<dbReference type="InterPro" id="IPR013083">
    <property type="entry name" value="Znf_RING/FYVE/PHD"/>
</dbReference>
<dbReference type="InterPro" id="IPR017907">
    <property type="entry name" value="Znf_RING_CS"/>
</dbReference>
<dbReference type="PANTHER" id="PTHR24103">
    <property type="entry name" value="E3 UBIQUITIN-PROTEIN LIGASE TRIM"/>
    <property type="match status" value="1"/>
</dbReference>
<dbReference type="Pfam" id="PF13765">
    <property type="entry name" value="PRY"/>
    <property type="match status" value="1"/>
</dbReference>
<dbReference type="Pfam" id="PF00622">
    <property type="entry name" value="SPRY"/>
    <property type="match status" value="1"/>
</dbReference>
<dbReference type="Pfam" id="PF00643">
    <property type="entry name" value="zf-B_box"/>
    <property type="match status" value="1"/>
</dbReference>
<dbReference type="Pfam" id="PF13445">
    <property type="entry name" value="zf-RING_UBOX"/>
    <property type="match status" value="1"/>
</dbReference>
<dbReference type="PRINTS" id="PR01407">
    <property type="entry name" value="BUTYPHLNCDUF"/>
</dbReference>
<dbReference type="SMART" id="SM00336">
    <property type="entry name" value="BBOX"/>
    <property type="match status" value="1"/>
</dbReference>
<dbReference type="SMART" id="SM00589">
    <property type="entry name" value="PRY"/>
    <property type="match status" value="1"/>
</dbReference>
<dbReference type="SMART" id="SM00184">
    <property type="entry name" value="RING"/>
    <property type="match status" value="1"/>
</dbReference>
<dbReference type="SMART" id="SM00449">
    <property type="entry name" value="SPRY"/>
    <property type="match status" value="1"/>
</dbReference>
<dbReference type="SUPFAM" id="SSF57845">
    <property type="entry name" value="B-box zinc-binding domain"/>
    <property type="match status" value="1"/>
</dbReference>
<dbReference type="SUPFAM" id="SSF49899">
    <property type="entry name" value="Concanavalin A-like lectins/glucanases"/>
    <property type="match status" value="1"/>
</dbReference>
<dbReference type="SUPFAM" id="SSF57850">
    <property type="entry name" value="RING/U-box"/>
    <property type="match status" value="1"/>
</dbReference>
<dbReference type="PROSITE" id="PS50188">
    <property type="entry name" value="B302_SPRY"/>
    <property type="match status" value="1"/>
</dbReference>
<dbReference type="PROSITE" id="PS50119">
    <property type="entry name" value="ZF_BBOX"/>
    <property type="match status" value="1"/>
</dbReference>
<dbReference type="PROSITE" id="PS00518">
    <property type="entry name" value="ZF_RING_1"/>
    <property type="match status" value="1"/>
</dbReference>
<dbReference type="PROSITE" id="PS50089">
    <property type="entry name" value="ZF_RING_2"/>
    <property type="match status" value="1"/>
</dbReference>
<organism>
    <name type="scientific">Xenopus tropicalis</name>
    <name type="common">Western clawed frog</name>
    <name type="synonym">Silurana tropicalis</name>
    <dbReference type="NCBI Taxonomy" id="8364"/>
    <lineage>
        <taxon>Eukaryota</taxon>
        <taxon>Metazoa</taxon>
        <taxon>Chordata</taxon>
        <taxon>Craniata</taxon>
        <taxon>Vertebrata</taxon>
        <taxon>Euteleostomi</taxon>
        <taxon>Amphibia</taxon>
        <taxon>Batrachia</taxon>
        <taxon>Anura</taxon>
        <taxon>Pipoidea</taxon>
        <taxon>Pipidae</taxon>
        <taxon>Xenopodinae</taxon>
        <taxon>Xenopus</taxon>
        <taxon>Silurana</taxon>
    </lineage>
</organism>
<proteinExistence type="evidence at transcript level"/>
<evidence type="ECO:0000250" key="1"/>
<evidence type="ECO:0000250" key="2">
    <source>
        <dbReference type="UniProtKB" id="Q1XH17"/>
    </source>
</evidence>
<evidence type="ECO:0000250" key="3">
    <source>
        <dbReference type="UniProtKB" id="Q6ZMU5"/>
    </source>
</evidence>
<evidence type="ECO:0000255" key="4"/>
<evidence type="ECO:0000255" key="5">
    <source>
        <dbReference type="PROSITE-ProRule" id="PRU00024"/>
    </source>
</evidence>
<evidence type="ECO:0000255" key="6">
    <source>
        <dbReference type="PROSITE-ProRule" id="PRU00175"/>
    </source>
</evidence>
<evidence type="ECO:0000255" key="7">
    <source>
        <dbReference type="PROSITE-ProRule" id="PRU00548"/>
    </source>
</evidence>
<evidence type="ECO:0000305" key="8"/>
<sequence>MSTPQLMQGMQKDLTCPLCLELFRAPVTPECGHTFCQGCLTGAPKNQDQNGSTPCPTCQTPSRPETLQINRQLEHLVQSFKQVPKGHCLEHLDPLSVYCEQDKELICGVCASLGKHKGHNIITAAEAYAKLKRQLPQQQVILQEARLKKEKTVAVLDRQVAEVQDTVSRFKGNVKHQLNAMRSYLSIMEASLSKEADNAEHTATEALLVERKTMGHYLDQLRQMDGVLKDVESQEQTEFLRKYCVVAARLNKILAESPPPGRLDIQLPIISDEFKFQVWRKMFRALMPALENLTFDPDTAQQNLVVFSDGKSVECSEQKQSVSDEPNRFDKSNCLVSKESFTEGEHYWEVLVEDKPRWALGVISETANRKGKLHASPSNGFWLIGCKEGKVYEAHTEQKEPRVLRVEGRPEKIGIYLSFSDGVVSFFDSSDEDNIKLLYTFNERFSGRLHPFFDVCWHDKGKNAQPLKIFYPPAEQL</sequence>
<comment type="function">
    <text evidence="2">Muscle-specific E3 ubiquitin-protein ligase that plays a central role in cell membrane repair by nucleating the assembly of the repair machinery at injury sites (By similarity). Acts as a sensor of oxidation: upon membrane damage, entry of extracellular oxidative environment results in disulfide bond formation and homooligomerization at the injury site (By similarity). This oligomerization acts as a nucleation site for recruitment of TRIM72-containing vesicles to the injury site, leading to membrane patch formation (By similarity). Probably acts upstream of the Ca(2+)-dependent membrane resealing process (By similarity). Required for transport of DYSF to sites of cell injury during repair patch formation (By similarity). Regulates membrane budding and exocytosis (By similarity). May be involved in the regulation of the mobility of KCNB1-containing endocytic vesicles (By similarity).</text>
</comment>
<comment type="catalytic activity">
    <reaction evidence="2">
        <text>S-ubiquitinyl-[E2 ubiquitin-conjugating enzyme]-L-cysteine + [acceptor protein]-L-lysine = [E2 ubiquitin-conjugating enzyme]-L-cysteine + N(6)-ubiquitinyl-[acceptor protein]-L-lysine.</text>
        <dbReference type="EC" id="2.3.2.27"/>
    </reaction>
</comment>
<comment type="activity regulation">
    <text evidence="2">Specifically binds phosphatidylserine (By similarity). The binding to phospholipids enhances ubiquitination activity (By similarity).</text>
</comment>
<comment type="pathway">
    <text evidence="2">Protein modification; protein ubiquitination.</text>
</comment>
<comment type="subunit">
    <text evidence="2">Homodimer (By similarity). Homooligomer; disulfide-linked (By similarity). Oligomerizes on the phospholipid membrane (By similarity).</text>
</comment>
<comment type="subcellular location">
    <subcellularLocation>
        <location evidence="1">Cell membrane</location>
        <location evidence="1">Sarcolemma</location>
    </subcellularLocation>
    <subcellularLocation>
        <location evidence="3">Cytoplasmic vesicle membrane</location>
    </subcellularLocation>
    <text evidence="1">Tethered to plasma membrane and cytoplasmic vesicles via its interaction with phosphatidylserine.</text>
</comment>
<comment type="domain">
    <text evidence="2">The RING domain is flexible in both the dimer and oligomer (By similarity). Binding to the negatively charged phosphatidylserine lipids is mediated by the positively charged PRYSPRY domains and is inhibited by Ca(2+) (By similarity).</text>
</comment>
<comment type="PTM">
    <text evidence="1">Disulfide bond formation at Cys-244 occurs in case of membrane damage that cause the entry of the oxidized milieu of the extracellular space, resulting in homooligomerization.</text>
</comment>
<comment type="similarity">
    <text evidence="8">Belongs to the TRIM/RBCC family.</text>
</comment>
<keyword id="KW-1003">Cell membrane</keyword>
<keyword id="KW-0175">Coiled coil</keyword>
<keyword id="KW-0968">Cytoplasmic vesicle</keyword>
<keyword id="KW-1015">Disulfide bond</keyword>
<keyword id="KW-0268">Exocytosis</keyword>
<keyword id="KW-0472">Membrane</keyword>
<keyword id="KW-0479">Metal-binding</keyword>
<keyword id="KW-1185">Reference proteome</keyword>
<keyword id="KW-0808">Transferase</keyword>
<keyword id="KW-0813">Transport</keyword>
<keyword id="KW-0833">Ubl conjugation pathway</keyword>
<keyword id="KW-0862">Zinc</keyword>
<keyword id="KW-0863">Zinc-finger</keyword>
<name>TRI72_XENTR</name>